<name>RIMP_ACIBY</name>
<protein>
    <recommendedName>
        <fullName evidence="1">Ribosome maturation factor RimP</fullName>
    </recommendedName>
</protein>
<feature type="chain" id="PRO_1000136726" description="Ribosome maturation factor RimP">
    <location>
        <begin position="1"/>
        <end position="174"/>
    </location>
</feature>
<accession>B0VE83</accession>
<keyword id="KW-0963">Cytoplasm</keyword>
<keyword id="KW-0690">Ribosome biogenesis</keyword>
<organism>
    <name type="scientific">Acinetobacter baumannii (strain AYE)</name>
    <dbReference type="NCBI Taxonomy" id="509173"/>
    <lineage>
        <taxon>Bacteria</taxon>
        <taxon>Pseudomonadati</taxon>
        <taxon>Pseudomonadota</taxon>
        <taxon>Gammaproteobacteria</taxon>
        <taxon>Moraxellales</taxon>
        <taxon>Moraxellaceae</taxon>
        <taxon>Acinetobacter</taxon>
        <taxon>Acinetobacter calcoaceticus/baumannii complex</taxon>
    </lineage>
</organism>
<proteinExistence type="inferred from homology"/>
<reference key="1">
    <citation type="journal article" date="2008" name="PLoS ONE">
        <title>Comparative analysis of Acinetobacters: three genomes for three lifestyles.</title>
        <authorList>
            <person name="Vallenet D."/>
            <person name="Nordmann P."/>
            <person name="Barbe V."/>
            <person name="Poirel L."/>
            <person name="Mangenot S."/>
            <person name="Bataille E."/>
            <person name="Dossat C."/>
            <person name="Gas S."/>
            <person name="Kreimeyer A."/>
            <person name="Lenoble P."/>
            <person name="Oztas S."/>
            <person name="Poulain J."/>
            <person name="Segurens B."/>
            <person name="Robert C."/>
            <person name="Abergel C."/>
            <person name="Claverie J.-M."/>
            <person name="Raoult D."/>
            <person name="Medigue C."/>
            <person name="Weissenbach J."/>
            <person name="Cruveiller S."/>
        </authorList>
    </citation>
    <scope>NUCLEOTIDE SEQUENCE [LARGE SCALE GENOMIC DNA]</scope>
    <source>
        <strain>AYE</strain>
    </source>
</reference>
<sequence>MKLSNKSQALYDMIAPAVEACGVDLWGIEFLPQGKRSLLRIYIDRPVDENAEPVINEDGEVEQGRGIGVEDCVRVTQQVGAMLDVHDPISGEYALEVSSPGWDRPFFQLEQLQGYIGQQVALRLIAAVENRRKFQAKLLAVDLENEEIQVEVEGKHVLDIDSNNIDKANLIYQD</sequence>
<evidence type="ECO:0000255" key="1">
    <source>
        <dbReference type="HAMAP-Rule" id="MF_01077"/>
    </source>
</evidence>
<gene>
    <name evidence="1" type="primary">rimP</name>
    <name type="ordered locus">ABAYE3440</name>
</gene>
<comment type="function">
    <text evidence="1">Required for maturation of 30S ribosomal subunits.</text>
</comment>
<comment type="subcellular location">
    <subcellularLocation>
        <location evidence="1">Cytoplasm</location>
    </subcellularLocation>
</comment>
<comment type="similarity">
    <text evidence="1">Belongs to the RimP family.</text>
</comment>
<dbReference type="EMBL" id="CU459141">
    <property type="protein sequence ID" value="CAM88233.1"/>
    <property type="molecule type" value="Genomic_DNA"/>
</dbReference>
<dbReference type="RefSeq" id="WP_000777730.1">
    <property type="nucleotide sequence ID" value="NZ_JBDGFB010000003.1"/>
</dbReference>
<dbReference type="SMR" id="B0VE83"/>
<dbReference type="EnsemblBacteria" id="CAM88233">
    <property type="protein sequence ID" value="CAM88233"/>
    <property type="gene ID" value="ABAYE3440"/>
</dbReference>
<dbReference type="GeneID" id="92892329"/>
<dbReference type="KEGG" id="aby:ABAYE3440"/>
<dbReference type="HOGENOM" id="CLU_070525_1_1_6"/>
<dbReference type="GO" id="GO:0005829">
    <property type="term" value="C:cytosol"/>
    <property type="evidence" value="ECO:0007669"/>
    <property type="project" value="TreeGrafter"/>
</dbReference>
<dbReference type="GO" id="GO:0000028">
    <property type="term" value="P:ribosomal small subunit assembly"/>
    <property type="evidence" value="ECO:0007669"/>
    <property type="project" value="TreeGrafter"/>
</dbReference>
<dbReference type="GO" id="GO:0006412">
    <property type="term" value="P:translation"/>
    <property type="evidence" value="ECO:0007669"/>
    <property type="project" value="TreeGrafter"/>
</dbReference>
<dbReference type="CDD" id="cd01734">
    <property type="entry name" value="YlxS_C"/>
    <property type="match status" value="1"/>
</dbReference>
<dbReference type="FunFam" id="3.30.300.70:FF:000001">
    <property type="entry name" value="Ribosome maturation factor RimP"/>
    <property type="match status" value="1"/>
</dbReference>
<dbReference type="Gene3D" id="2.30.30.180">
    <property type="entry name" value="Ribosome maturation factor RimP, C-terminal domain"/>
    <property type="match status" value="1"/>
</dbReference>
<dbReference type="Gene3D" id="3.30.300.70">
    <property type="entry name" value="RimP-like superfamily, N-terminal"/>
    <property type="match status" value="1"/>
</dbReference>
<dbReference type="HAMAP" id="MF_01077">
    <property type="entry name" value="RimP"/>
    <property type="match status" value="1"/>
</dbReference>
<dbReference type="InterPro" id="IPR003728">
    <property type="entry name" value="Ribosome_maturation_RimP"/>
</dbReference>
<dbReference type="InterPro" id="IPR028998">
    <property type="entry name" value="RimP_C"/>
</dbReference>
<dbReference type="InterPro" id="IPR036847">
    <property type="entry name" value="RimP_C_sf"/>
</dbReference>
<dbReference type="InterPro" id="IPR028989">
    <property type="entry name" value="RimP_N"/>
</dbReference>
<dbReference type="InterPro" id="IPR035956">
    <property type="entry name" value="RimP_N_sf"/>
</dbReference>
<dbReference type="NCBIfam" id="NF011224">
    <property type="entry name" value="PRK14631.1"/>
    <property type="match status" value="1"/>
</dbReference>
<dbReference type="PANTHER" id="PTHR33867">
    <property type="entry name" value="RIBOSOME MATURATION FACTOR RIMP"/>
    <property type="match status" value="1"/>
</dbReference>
<dbReference type="PANTHER" id="PTHR33867:SF1">
    <property type="entry name" value="RIBOSOME MATURATION FACTOR RIMP"/>
    <property type="match status" value="1"/>
</dbReference>
<dbReference type="Pfam" id="PF17384">
    <property type="entry name" value="DUF150_C"/>
    <property type="match status" value="1"/>
</dbReference>
<dbReference type="Pfam" id="PF02576">
    <property type="entry name" value="RimP_N"/>
    <property type="match status" value="1"/>
</dbReference>
<dbReference type="SUPFAM" id="SSF74942">
    <property type="entry name" value="YhbC-like, C-terminal domain"/>
    <property type="match status" value="1"/>
</dbReference>
<dbReference type="SUPFAM" id="SSF75420">
    <property type="entry name" value="YhbC-like, N-terminal domain"/>
    <property type="match status" value="1"/>
</dbReference>